<organism>
    <name type="scientific">Syntrophus aciditrophicus (strain SB)</name>
    <dbReference type="NCBI Taxonomy" id="56780"/>
    <lineage>
        <taxon>Bacteria</taxon>
        <taxon>Pseudomonadati</taxon>
        <taxon>Thermodesulfobacteriota</taxon>
        <taxon>Syntrophia</taxon>
        <taxon>Syntrophales</taxon>
        <taxon>Syntrophaceae</taxon>
        <taxon>Syntrophus</taxon>
    </lineage>
</organism>
<evidence type="ECO:0000255" key="1">
    <source>
        <dbReference type="HAMAP-Rule" id="MF_01333"/>
    </source>
</evidence>
<evidence type="ECO:0000305" key="2"/>
<comment type="function">
    <text evidence="1">This is one of the proteins that bind and probably mediate the attachment of the 5S RNA into the large ribosomal subunit, where it forms part of the central protuberance. In the 70S ribosome it contacts protein S13 of the 30S subunit (bridge B1b), connecting the 2 subunits; this bridge is implicated in subunit movement. Contacts the P site tRNA; the 5S rRNA and some of its associated proteins might help stabilize positioning of ribosome-bound tRNAs.</text>
</comment>
<comment type="subunit">
    <text evidence="1">Part of the 50S ribosomal subunit; part of the 5S rRNA/L5/L18/L25 subcomplex. Contacts the 5S rRNA and the P site tRNA. Forms a bridge to the 30S subunit in the 70S ribosome.</text>
</comment>
<comment type="similarity">
    <text evidence="1">Belongs to the universal ribosomal protein uL5 family.</text>
</comment>
<sequence>MARLKDYYKKEVIPALISEFGYKNPMQVPVMKKIVVNMGLGEAIQNVKILDSAAGELEMITGQKVVITKAKRSIATFKLRKGMSIGCRVTLRRERMYEFLDRFINVALPRIRDFRGVSPNTFDGRGNYSIGVKEQIIFPEIEYDKIEKIRGMNIAIVTSANTDEEARALLKFMGVPFRS</sequence>
<gene>
    <name evidence="1" type="primary">rplE</name>
    <name type="ordered locus">SYNAS_03140</name>
    <name type="ORF">SYN_03314</name>
</gene>
<keyword id="KW-1185">Reference proteome</keyword>
<keyword id="KW-0687">Ribonucleoprotein</keyword>
<keyword id="KW-0689">Ribosomal protein</keyword>
<keyword id="KW-0694">RNA-binding</keyword>
<keyword id="KW-0699">rRNA-binding</keyword>
<keyword id="KW-0820">tRNA-binding</keyword>
<reference key="1">
    <citation type="journal article" date="2007" name="Proc. Natl. Acad. Sci. U.S.A.">
        <title>The genome of Syntrophus aciditrophicus: life at the thermodynamic limit of microbial growth.</title>
        <authorList>
            <person name="McInerney M.J."/>
            <person name="Rohlin L."/>
            <person name="Mouttaki H."/>
            <person name="Kim U."/>
            <person name="Krupp R.S."/>
            <person name="Rios-Hernandez L."/>
            <person name="Sieber J."/>
            <person name="Struchtemeyer C.G."/>
            <person name="Bhattacharyya A."/>
            <person name="Campbell J.W."/>
            <person name="Gunsalus R.P."/>
        </authorList>
    </citation>
    <scope>NUCLEOTIDE SEQUENCE [LARGE SCALE GENOMIC DNA]</scope>
    <source>
        <strain>SB</strain>
    </source>
</reference>
<dbReference type="EMBL" id="CP000252">
    <property type="protein sequence ID" value="ABC76193.1"/>
    <property type="molecule type" value="Genomic_DNA"/>
</dbReference>
<dbReference type="RefSeq" id="WP_011416227.1">
    <property type="nucleotide sequence ID" value="NC_007759.1"/>
</dbReference>
<dbReference type="SMR" id="Q2LQA8"/>
<dbReference type="FunCoup" id="Q2LQA8">
    <property type="interactions" value="571"/>
</dbReference>
<dbReference type="STRING" id="56780.SYN_03314"/>
<dbReference type="KEGG" id="sat:SYN_03314"/>
<dbReference type="eggNOG" id="COG0094">
    <property type="taxonomic scope" value="Bacteria"/>
</dbReference>
<dbReference type="HOGENOM" id="CLU_061015_2_1_7"/>
<dbReference type="InParanoid" id="Q2LQA8"/>
<dbReference type="OrthoDB" id="9806626at2"/>
<dbReference type="Proteomes" id="UP000001933">
    <property type="component" value="Chromosome"/>
</dbReference>
<dbReference type="GO" id="GO:1990904">
    <property type="term" value="C:ribonucleoprotein complex"/>
    <property type="evidence" value="ECO:0007669"/>
    <property type="project" value="UniProtKB-KW"/>
</dbReference>
<dbReference type="GO" id="GO:0005840">
    <property type="term" value="C:ribosome"/>
    <property type="evidence" value="ECO:0007669"/>
    <property type="project" value="UniProtKB-KW"/>
</dbReference>
<dbReference type="GO" id="GO:0019843">
    <property type="term" value="F:rRNA binding"/>
    <property type="evidence" value="ECO:0007669"/>
    <property type="project" value="UniProtKB-UniRule"/>
</dbReference>
<dbReference type="GO" id="GO:0003735">
    <property type="term" value="F:structural constituent of ribosome"/>
    <property type="evidence" value="ECO:0007669"/>
    <property type="project" value="InterPro"/>
</dbReference>
<dbReference type="GO" id="GO:0000049">
    <property type="term" value="F:tRNA binding"/>
    <property type="evidence" value="ECO:0007669"/>
    <property type="project" value="UniProtKB-UniRule"/>
</dbReference>
<dbReference type="GO" id="GO:0006412">
    <property type="term" value="P:translation"/>
    <property type="evidence" value="ECO:0007669"/>
    <property type="project" value="UniProtKB-UniRule"/>
</dbReference>
<dbReference type="FunFam" id="3.30.1440.10:FF:000001">
    <property type="entry name" value="50S ribosomal protein L5"/>
    <property type="match status" value="1"/>
</dbReference>
<dbReference type="Gene3D" id="3.30.1440.10">
    <property type="match status" value="1"/>
</dbReference>
<dbReference type="HAMAP" id="MF_01333_B">
    <property type="entry name" value="Ribosomal_uL5_B"/>
    <property type="match status" value="1"/>
</dbReference>
<dbReference type="InterPro" id="IPR002132">
    <property type="entry name" value="Ribosomal_uL5"/>
</dbReference>
<dbReference type="InterPro" id="IPR020930">
    <property type="entry name" value="Ribosomal_uL5_bac-type"/>
</dbReference>
<dbReference type="InterPro" id="IPR031309">
    <property type="entry name" value="Ribosomal_uL5_C"/>
</dbReference>
<dbReference type="InterPro" id="IPR020929">
    <property type="entry name" value="Ribosomal_uL5_CS"/>
</dbReference>
<dbReference type="InterPro" id="IPR022803">
    <property type="entry name" value="Ribosomal_uL5_dom_sf"/>
</dbReference>
<dbReference type="InterPro" id="IPR031310">
    <property type="entry name" value="Ribosomal_uL5_N"/>
</dbReference>
<dbReference type="NCBIfam" id="NF000585">
    <property type="entry name" value="PRK00010.1"/>
    <property type="match status" value="1"/>
</dbReference>
<dbReference type="PANTHER" id="PTHR11994">
    <property type="entry name" value="60S RIBOSOMAL PROTEIN L11-RELATED"/>
    <property type="match status" value="1"/>
</dbReference>
<dbReference type="Pfam" id="PF00281">
    <property type="entry name" value="Ribosomal_L5"/>
    <property type="match status" value="1"/>
</dbReference>
<dbReference type="Pfam" id="PF00673">
    <property type="entry name" value="Ribosomal_L5_C"/>
    <property type="match status" value="1"/>
</dbReference>
<dbReference type="PIRSF" id="PIRSF002161">
    <property type="entry name" value="Ribosomal_L5"/>
    <property type="match status" value="1"/>
</dbReference>
<dbReference type="SUPFAM" id="SSF55282">
    <property type="entry name" value="RL5-like"/>
    <property type="match status" value="1"/>
</dbReference>
<dbReference type="PROSITE" id="PS00358">
    <property type="entry name" value="RIBOSOMAL_L5"/>
    <property type="match status" value="1"/>
</dbReference>
<proteinExistence type="inferred from homology"/>
<name>RL5_SYNAS</name>
<feature type="chain" id="PRO_0000243079" description="Large ribosomal subunit protein uL5">
    <location>
        <begin position="1"/>
        <end position="179"/>
    </location>
</feature>
<accession>Q2LQA8</accession>
<protein>
    <recommendedName>
        <fullName evidence="1">Large ribosomal subunit protein uL5</fullName>
    </recommendedName>
    <alternativeName>
        <fullName evidence="2">50S ribosomal protein L5</fullName>
    </alternativeName>
</protein>